<accession>Q2UGU3</accession>
<name>SPT5_ASPOR</name>
<sequence>MSRNMLDHDFGSDEEDDDFNPAPAYDSDNEDARPTHQDRDDDDDEEDVKPSRRAERRVGSEEADDNEDADGHDDEEEDENDDDDEEEEDEDEEGAVSRPKKRRRKGGVAHFFEEEAGVDEDEDEAEDEEDEMAELGGEMHPDDMDALPVGAETDDRRHRQLDRQRELEASMDAEKQAQLLKERYGRNRAAASDAVVVPKRLLLPSVEDPSIWGVRCKPGKEREVIFAIQKRIEERPMGSRNPMKIISAFERGGAMSGYIYVEARRQADVMDALQDMSNVYPRTKMILVPVREMPDLLRVQKSEELLPGGWVRIKRGKYQNDLAQIEEVETNGLAVTVRLVPRLDYGMNEDIGAPFMDPKRKRPGMNPAVARPPQRLFSEAEAKKKHGKYLSATSGLGGKSWSYLGETYVDGFLIKDMKVQHLITKNVSPRLEEVTMFARGSEDGTANLDLASLAETLKNSTAEDSYLPGDPVEVFRGEQQGLIGRTTSTRGDIVTLQVTEGDLAGQHIDAPVKSLRKRFREGDHVKVIGGSRYQDELGMVVQVKDDTVTLLSDMSMQEITVFSKDLRLSAETGVDGKLGMFDVHDLVQLDAATVACIVKVDRESLRVLDQNGSIRTILPTQVTNKITPRRDAVATDRNGAEIRHGDTVREVYGEQRNGVILHIHRSFLFLHNKAQAENSGITVVRTTNVVTVSAKGGRSTGPDLTKMNPALMSRGGPSGMMGPPKSFGRDRMIGKTVMVRKGPFKGLVGIVKDAGDVQARVELHSKNKLVSIPKELLVVKDPVTGQTIEMGRGRGGPRVPSAAPPSGWQGGRTPMAAADSSRTPAWGGASSARTPAWAGMGGSRTPAWKNDGSRTSNPYDGSRTAYGGFGSRTPAWNAGARTPYGGSGSGQSDFDAFAAGSRTPAWNANSGSRTPAWSGATASNGSKDSRGYDAPTPGGAYSAPTPGAYASAPTPGVSAPTPGAWADSAPTPGAFNAPTPGGPSKKPYDAPTPAAWDSRPYDAPTPAMGGDGDDAGPRYEDGTPSP</sequence>
<keyword id="KW-0507">mRNA processing</keyword>
<keyword id="KW-0539">Nucleus</keyword>
<keyword id="KW-1185">Reference proteome</keyword>
<keyword id="KW-0677">Repeat</keyword>
<keyword id="KW-0804">Transcription</keyword>
<proteinExistence type="inferred from homology"/>
<gene>
    <name type="primary">spt5</name>
    <name type="ORF">AO090023000710</name>
</gene>
<evidence type="ECO:0000250" key="1"/>
<evidence type="ECO:0000256" key="2">
    <source>
        <dbReference type="SAM" id="MobiDB-lite"/>
    </source>
</evidence>
<evidence type="ECO:0000305" key="3"/>
<organism>
    <name type="scientific">Aspergillus oryzae (strain ATCC 42149 / RIB 40)</name>
    <name type="common">Yellow koji mold</name>
    <dbReference type="NCBI Taxonomy" id="510516"/>
    <lineage>
        <taxon>Eukaryota</taxon>
        <taxon>Fungi</taxon>
        <taxon>Dikarya</taxon>
        <taxon>Ascomycota</taxon>
        <taxon>Pezizomycotina</taxon>
        <taxon>Eurotiomycetes</taxon>
        <taxon>Eurotiomycetidae</taxon>
        <taxon>Eurotiales</taxon>
        <taxon>Aspergillaceae</taxon>
        <taxon>Aspergillus</taxon>
        <taxon>Aspergillus subgen. Circumdati</taxon>
    </lineage>
</organism>
<feature type="chain" id="PRO_0000238556" description="Transcription elongation factor spt5">
    <location>
        <begin position="1"/>
        <end position="1026"/>
    </location>
</feature>
<feature type="domain" description="KOW 1">
    <location>
        <begin position="305"/>
        <end position="338"/>
    </location>
</feature>
<feature type="domain" description="KOW 2">
    <location>
        <begin position="519"/>
        <end position="553"/>
    </location>
</feature>
<feature type="region of interest" description="Disordered" evidence="2">
    <location>
        <begin position="1"/>
        <end position="172"/>
    </location>
</feature>
<feature type="region of interest" description="Disordered" evidence="2">
    <location>
        <begin position="694"/>
        <end position="729"/>
    </location>
</feature>
<feature type="region of interest" description="Disordered" evidence="2">
    <location>
        <begin position="788"/>
        <end position="859"/>
    </location>
</feature>
<feature type="region of interest" description="Disordered" evidence="2">
    <location>
        <begin position="905"/>
        <end position="1026"/>
    </location>
</feature>
<feature type="compositionally biased region" description="Basic and acidic residues" evidence="2">
    <location>
        <begin position="1"/>
        <end position="11"/>
    </location>
</feature>
<feature type="compositionally biased region" description="Basic and acidic residues" evidence="2">
    <location>
        <begin position="30"/>
        <end position="39"/>
    </location>
</feature>
<feature type="compositionally biased region" description="Basic and acidic residues" evidence="2">
    <location>
        <begin position="48"/>
        <end position="60"/>
    </location>
</feature>
<feature type="compositionally biased region" description="Acidic residues" evidence="2">
    <location>
        <begin position="61"/>
        <end position="94"/>
    </location>
</feature>
<feature type="compositionally biased region" description="Basic residues" evidence="2">
    <location>
        <begin position="98"/>
        <end position="107"/>
    </location>
</feature>
<feature type="compositionally biased region" description="Acidic residues" evidence="2">
    <location>
        <begin position="114"/>
        <end position="133"/>
    </location>
</feature>
<feature type="compositionally biased region" description="Basic and acidic residues" evidence="2">
    <location>
        <begin position="153"/>
        <end position="172"/>
    </location>
</feature>
<feature type="compositionally biased region" description="Low complexity" evidence="2">
    <location>
        <begin position="712"/>
        <end position="726"/>
    </location>
</feature>
<feature type="compositionally biased region" description="Polar residues" evidence="2">
    <location>
        <begin position="905"/>
        <end position="926"/>
    </location>
</feature>
<feature type="compositionally biased region" description="Basic and acidic residues" evidence="2">
    <location>
        <begin position="1015"/>
        <end position="1026"/>
    </location>
</feature>
<dbReference type="EMBL" id="BA000051">
    <property type="protein sequence ID" value="BAE59222.1"/>
    <property type="molecule type" value="Genomic_DNA"/>
</dbReference>
<dbReference type="RefSeq" id="XP_001821224.1">
    <property type="nucleotide sequence ID" value="XM_001821172.1"/>
</dbReference>
<dbReference type="SMR" id="Q2UGU3"/>
<dbReference type="STRING" id="510516.Q2UGU3"/>
<dbReference type="EnsemblFungi" id="BAE59222">
    <property type="protein sequence ID" value="BAE59222"/>
    <property type="gene ID" value="AO090023000710"/>
</dbReference>
<dbReference type="GeneID" id="5993226"/>
<dbReference type="KEGG" id="aor:AO090023000710"/>
<dbReference type="VEuPathDB" id="FungiDB:AO090023000710"/>
<dbReference type="HOGENOM" id="CLU_003537_1_1_1"/>
<dbReference type="OMA" id="YPVGYMN"/>
<dbReference type="OrthoDB" id="102804at5052"/>
<dbReference type="Proteomes" id="UP000006564">
    <property type="component" value="Chromosome 3"/>
</dbReference>
<dbReference type="GO" id="GO:0032044">
    <property type="term" value="C:DSIF complex"/>
    <property type="evidence" value="ECO:0007669"/>
    <property type="project" value="EnsemblFungi"/>
</dbReference>
<dbReference type="GO" id="GO:0140463">
    <property type="term" value="F:chromatin-protein adaptor activity"/>
    <property type="evidence" value="ECO:0007669"/>
    <property type="project" value="EnsemblFungi"/>
</dbReference>
<dbReference type="GO" id="GO:0003729">
    <property type="term" value="F:mRNA binding"/>
    <property type="evidence" value="ECO:0007669"/>
    <property type="project" value="TreeGrafter"/>
</dbReference>
<dbReference type="GO" id="GO:0003711">
    <property type="term" value="F:transcription elongation factor activity"/>
    <property type="evidence" value="ECO:0007669"/>
    <property type="project" value="EnsemblFungi"/>
</dbReference>
<dbReference type="GO" id="GO:0006397">
    <property type="term" value="P:mRNA processing"/>
    <property type="evidence" value="ECO:0007669"/>
    <property type="project" value="UniProtKB-KW"/>
</dbReference>
<dbReference type="GO" id="GO:0032784">
    <property type="term" value="P:regulation of DNA-templated transcription elongation"/>
    <property type="evidence" value="ECO:0007669"/>
    <property type="project" value="InterPro"/>
</dbReference>
<dbReference type="GO" id="GO:0006357">
    <property type="term" value="P:regulation of transcription by RNA polymerase II"/>
    <property type="evidence" value="ECO:0007669"/>
    <property type="project" value="InterPro"/>
</dbReference>
<dbReference type="GO" id="GO:0140673">
    <property type="term" value="P:transcription elongation-coupled chromatin remodeling"/>
    <property type="evidence" value="ECO:0007669"/>
    <property type="project" value="InterPro"/>
</dbReference>
<dbReference type="CDD" id="cd06081">
    <property type="entry name" value="KOW_Spt5_1"/>
    <property type="match status" value="1"/>
</dbReference>
<dbReference type="CDD" id="cd06082">
    <property type="entry name" value="KOW_Spt5_2"/>
    <property type="match status" value="1"/>
</dbReference>
<dbReference type="CDD" id="cd06083">
    <property type="entry name" value="KOW_Spt5_3"/>
    <property type="match status" value="1"/>
</dbReference>
<dbReference type="CDD" id="cd06084">
    <property type="entry name" value="KOW_Spt5_4"/>
    <property type="match status" value="1"/>
</dbReference>
<dbReference type="CDD" id="cd06085">
    <property type="entry name" value="KOW_Spt5_5"/>
    <property type="match status" value="1"/>
</dbReference>
<dbReference type="CDD" id="cd09888">
    <property type="entry name" value="NGN_Euk"/>
    <property type="match status" value="1"/>
</dbReference>
<dbReference type="FunFam" id="2.30.30.30:FF:000018">
    <property type="entry name" value="Transcription elongation factor SPT5"/>
    <property type="match status" value="1"/>
</dbReference>
<dbReference type="FunFam" id="2.30.30.30:FF:000029">
    <property type="entry name" value="Transcription elongation factor SPT5"/>
    <property type="match status" value="1"/>
</dbReference>
<dbReference type="FunFam" id="2.30.30.30:FF:000054">
    <property type="entry name" value="Transcription elongation factor SPT5"/>
    <property type="match status" value="1"/>
</dbReference>
<dbReference type="FunFam" id="3.30.70.940:FF:000005">
    <property type="entry name" value="Transcription elongation factor SPT5"/>
    <property type="match status" value="1"/>
</dbReference>
<dbReference type="Gene3D" id="2.30.30.30">
    <property type="match status" value="3"/>
</dbReference>
<dbReference type="Gene3D" id="3.30.70.940">
    <property type="entry name" value="NusG, N-terminal domain"/>
    <property type="match status" value="1"/>
</dbReference>
<dbReference type="InterPro" id="IPR005824">
    <property type="entry name" value="KOW"/>
</dbReference>
<dbReference type="InterPro" id="IPR041973">
    <property type="entry name" value="KOW_Spt5_1"/>
</dbReference>
<dbReference type="InterPro" id="IPR041975">
    <property type="entry name" value="KOW_Spt5_2"/>
</dbReference>
<dbReference type="InterPro" id="IPR041976">
    <property type="entry name" value="KOW_Spt5_3"/>
</dbReference>
<dbReference type="InterPro" id="IPR041977">
    <property type="entry name" value="KOW_Spt5_4"/>
</dbReference>
<dbReference type="InterPro" id="IPR041978">
    <property type="entry name" value="KOW_Spt5_5"/>
</dbReference>
<dbReference type="InterPro" id="IPR005100">
    <property type="entry name" value="NGN-domain"/>
</dbReference>
<dbReference type="InterPro" id="IPR006645">
    <property type="entry name" value="NGN-like_dom"/>
</dbReference>
<dbReference type="InterPro" id="IPR036735">
    <property type="entry name" value="NGN_dom_sf"/>
</dbReference>
<dbReference type="InterPro" id="IPR039385">
    <property type="entry name" value="NGN_Euk"/>
</dbReference>
<dbReference type="InterPro" id="IPR014722">
    <property type="entry name" value="Rib_uL2_dom2"/>
</dbReference>
<dbReference type="InterPro" id="IPR039659">
    <property type="entry name" value="SPT5"/>
</dbReference>
<dbReference type="InterPro" id="IPR024945">
    <property type="entry name" value="Spt5_C_dom"/>
</dbReference>
<dbReference type="InterPro" id="IPR022581">
    <property type="entry name" value="Spt5_N"/>
</dbReference>
<dbReference type="InterPro" id="IPR017071">
    <property type="entry name" value="TF_Spt5_eukaryote"/>
</dbReference>
<dbReference type="InterPro" id="IPR008991">
    <property type="entry name" value="Translation_prot_SH3-like_sf"/>
</dbReference>
<dbReference type="PANTHER" id="PTHR11125">
    <property type="entry name" value="SUPPRESSOR OF TY 5"/>
    <property type="match status" value="1"/>
</dbReference>
<dbReference type="PANTHER" id="PTHR11125:SF7">
    <property type="entry name" value="TRANSCRIPTION ELONGATION FACTOR SPT5"/>
    <property type="match status" value="1"/>
</dbReference>
<dbReference type="Pfam" id="PF12815">
    <property type="entry name" value="CTD"/>
    <property type="match status" value="1"/>
</dbReference>
<dbReference type="Pfam" id="PF23042">
    <property type="entry name" value="KOW1_SPT5"/>
    <property type="match status" value="1"/>
</dbReference>
<dbReference type="Pfam" id="PF23284">
    <property type="entry name" value="KOW2_Spt5"/>
    <property type="match status" value="1"/>
</dbReference>
<dbReference type="Pfam" id="PF23291">
    <property type="entry name" value="KOW4_SPT5"/>
    <property type="match status" value="1"/>
</dbReference>
<dbReference type="Pfam" id="PF23290">
    <property type="entry name" value="KOW5_SPT5"/>
    <property type="match status" value="1"/>
</dbReference>
<dbReference type="Pfam" id="PF23037">
    <property type="entry name" value="KOWx_SPT5"/>
    <property type="match status" value="1"/>
</dbReference>
<dbReference type="Pfam" id="PF03439">
    <property type="entry name" value="Spt5-NGN"/>
    <property type="match status" value="1"/>
</dbReference>
<dbReference type="Pfam" id="PF11942">
    <property type="entry name" value="Spt5_N"/>
    <property type="match status" value="1"/>
</dbReference>
<dbReference type="PIRSF" id="PIRSF036945">
    <property type="entry name" value="Spt5"/>
    <property type="match status" value="1"/>
</dbReference>
<dbReference type="SMART" id="SM01104">
    <property type="entry name" value="CTD"/>
    <property type="match status" value="1"/>
</dbReference>
<dbReference type="SMART" id="SM00739">
    <property type="entry name" value="KOW"/>
    <property type="match status" value="5"/>
</dbReference>
<dbReference type="SMART" id="SM00738">
    <property type="entry name" value="NGN"/>
    <property type="match status" value="1"/>
</dbReference>
<dbReference type="SUPFAM" id="SSF50104">
    <property type="entry name" value="Translation proteins SH3-like domain"/>
    <property type="match status" value="1"/>
</dbReference>
<reference key="1">
    <citation type="journal article" date="2005" name="Nature">
        <title>Genome sequencing and analysis of Aspergillus oryzae.</title>
        <authorList>
            <person name="Machida M."/>
            <person name="Asai K."/>
            <person name="Sano M."/>
            <person name="Tanaka T."/>
            <person name="Kumagai T."/>
            <person name="Terai G."/>
            <person name="Kusumoto K."/>
            <person name="Arima T."/>
            <person name="Akita O."/>
            <person name="Kashiwagi Y."/>
            <person name="Abe K."/>
            <person name="Gomi K."/>
            <person name="Horiuchi H."/>
            <person name="Kitamoto K."/>
            <person name="Kobayashi T."/>
            <person name="Takeuchi M."/>
            <person name="Denning D.W."/>
            <person name="Galagan J.E."/>
            <person name="Nierman W.C."/>
            <person name="Yu J."/>
            <person name="Archer D.B."/>
            <person name="Bennett J.W."/>
            <person name="Bhatnagar D."/>
            <person name="Cleveland T.E."/>
            <person name="Fedorova N.D."/>
            <person name="Gotoh O."/>
            <person name="Horikawa H."/>
            <person name="Hosoyama A."/>
            <person name="Ichinomiya M."/>
            <person name="Igarashi R."/>
            <person name="Iwashita K."/>
            <person name="Juvvadi P.R."/>
            <person name="Kato M."/>
            <person name="Kato Y."/>
            <person name="Kin T."/>
            <person name="Kokubun A."/>
            <person name="Maeda H."/>
            <person name="Maeyama N."/>
            <person name="Maruyama J."/>
            <person name="Nagasaki H."/>
            <person name="Nakajima T."/>
            <person name="Oda K."/>
            <person name="Okada K."/>
            <person name="Paulsen I."/>
            <person name="Sakamoto K."/>
            <person name="Sawano T."/>
            <person name="Takahashi M."/>
            <person name="Takase K."/>
            <person name="Terabayashi Y."/>
            <person name="Wortman J.R."/>
            <person name="Yamada O."/>
            <person name="Yamagata Y."/>
            <person name="Anazawa H."/>
            <person name="Hata Y."/>
            <person name="Koide Y."/>
            <person name="Komori T."/>
            <person name="Koyama Y."/>
            <person name="Minetoki T."/>
            <person name="Suharnan S."/>
            <person name="Tanaka A."/>
            <person name="Isono K."/>
            <person name="Kuhara S."/>
            <person name="Ogasawara N."/>
            <person name="Kikuchi H."/>
        </authorList>
    </citation>
    <scope>NUCLEOTIDE SEQUENCE [LARGE SCALE GENOMIC DNA]</scope>
    <source>
        <strain>ATCC 42149 / RIB 40</strain>
    </source>
</reference>
<comment type="function">
    <text evidence="1">The spt4-spt5 complex mediates both activation and inhibition of transcription elongation, and plays a role in pre-mRNA processing. This complex seems to be important for the stability of the RNA polymerase II elongation machinery on the chromatin template but not for the inherent ability of this machinery to translocate down the gene (By similarity).</text>
</comment>
<comment type="subunit">
    <text evidence="1">Component of the spt4-spt5 complex. Interacts with RNA polymerase II (By similarity).</text>
</comment>
<comment type="subcellular location">
    <subcellularLocation>
        <location evidence="1">Nucleus</location>
    </subcellularLocation>
</comment>
<comment type="similarity">
    <text evidence="3">Belongs to the SPT5 family.</text>
</comment>
<protein>
    <recommendedName>
        <fullName>Transcription elongation factor spt5</fullName>
    </recommendedName>
    <alternativeName>
        <fullName>Chromatin elongation factor spt5</fullName>
    </alternativeName>
</protein>